<organism>
    <name type="scientific">Ignicoccus hospitalis (strain KIN4/I / DSM 18386 / JCM 14125)</name>
    <dbReference type="NCBI Taxonomy" id="453591"/>
    <lineage>
        <taxon>Archaea</taxon>
        <taxon>Thermoproteota</taxon>
        <taxon>Thermoprotei</taxon>
        <taxon>Desulfurococcales</taxon>
        <taxon>Desulfurococcaceae</taxon>
        <taxon>Ignicoccus</taxon>
    </lineage>
</organism>
<dbReference type="EC" id="2.5.1.46" evidence="1"/>
<dbReference type="EMBL" id="CP000816">
    <property type="protein sequence ID" value="ABU81813.1"/>
    <property type="molecule type" value="Genomic_DNA"/>
</dbReference>
<dbReference type="RefSeq" id="WP_011998665.1">
    <property type="nucleotide sequence ID" value="NC_009776.1"/>
</dbReference>
<dbReference type="SMR" id="A8AA61"/>
<dbReference type="STRING" id="453591.Igni_0631"/>
<dbReference type="GeneID" id="5562987"/>
<dbReference type="KEGG" id="iho:Igni_0631"/>
<dbReference type="eggNOG" id="arCOG04142">
    <property type="taxonomic scope" value="Archaea"/>
</dbReference>
<dbReference type="HOGENOM" id="CLU_039781_1_0_2"/>
<dbReference type="OrthoDB" id="17730at2157"/>
<dbReference type="PhylomeDB" id="A8AA61"/>
<dbReference type="UniPathway" id="UPA00354"/>
<dbReference type="Proteomes" id="UP000000262">
    <property type="component" value="Chromosome"/>
</dbReference>
<dbReference type="GO" id="GO:0005737">
    <property type="term" value="C:cytoplasm"/>
    <property type="evidence" value="ECO:0007669"/>
    <property type="project" value="TreeGrafter"/>
</dbReference>
<dbReference type="GO" id="GO:0034038">
    <property type="term" value="F:deoxyhypusine synthase activity"/>
    <property type="evidence" value="ECO:0007669"/>
    <property type="project" value="UniProtKB-UniRule"/>
</dbReference>
<dbReference type="FunFam" id="3.40.910.10:FF:000010">
    <property type="entry name" value="Deoxyhypusine synthase"/>
    <property type="match status" value="1"/>
</dbReference>
<dbReference type="Gene3D" id="3.40.910.10">
    <property type="entry name" value="Deoxyhypusine synthase"/>
    <property type="match status" value="1"/>
</dbReference>
<dbReference type="HAMAP" id="MF_00153">
    <property type="entry name" value="DHS"/>
    <property type="match status" value="1"/>
</dbReference>
<dbReference type="InterPro" id="IPR022899">
    <property type="entry name" value="Deoxyhypus_synthase_arc"/>
</dbReference>
<dbReference type="InterPro" id="IPR002773">
    <property type="entry name" value="Deoxyhypusine_synthase"/>
</dbReference>
<dbReference type="InterPro" id="IPR036982">
    <property type="entry name" value="Deoxyhypusine_synthase_sf"/>
</dbReference>
<dbReference type="InterPro" id="IPR029035">
    <property type="entry name" value="DHS-like_NAD/FAD-binding_dom"/>
</dbReference>
<dbReference type="NCBIfam" id="NF002294">
    <property type="entry name" value="PRK01221.1"/>
    <property type="match status" value="1"/>
</dbReference>
<dbReference type="PANTHER" id="PTHR11703">
    <property type="entry name" value="DEOXYHYPUSINE SYNTHASE"/>
    <property type="match status" value="1"/>
</dbReference>
<dbReference type="PANTHER" id="PTHR11703:SF0">
    <property type="entry name" value="DEOXYHYPUSINE SYNTHASE"/>
    <property type="match status" value="1"/>
</dbReference>
<dbReference type="Pfam" id="PF01916">
    <property type="entry name" value="DS"/>
    <property type="match status" value="1"/>
</dbReference>
<dbReference type="SUPFAM" id="SSF52467">
    <property type="entry name" value="DHS-like NAD/FAD-binding domain"/>
    <property type="match status" value="1"/>
</dbReference>
<comment type="function">
    <text evidence="1">Catalyzes the NAD-dependent oxidative cleavage of spermidine and the subsequent transfer of the butylamine moiety of spermidine to the epsilon-amino group of a specific lysine residue of the eIF-5A precursor protein to form the intermediate deoxyhypusine residue.</text>
</comment>
<comment type="catalytic activity">
    <reaction evidence="1">
        <text>[eIF5A protein]-L-lysine + spermidine = [eIF5A protein]-deoxyhypusine + propane-1,3-diamine</text>
        <dbReference type="Rhea" id="RHEA:33299"/>
        <dbReference type="Rhea" id="RHEA-COMP:10143"/>
        <dbReference type="Rhea" id="RHEA-COMP:10144"/>
        <dbReference type="ChEBI" id="CHEBI:29969"/>
        <dbReference type="ChEBI" id="CHEBI:57484"/>
        <dbReference type="ChEBI" id="CHEBI:57834"/>
        <dbReference type="ChEBI" id="CHEBI:82657"/>
        <dbReference type="EC" id="2.5.1.46"/>
    </reaction>
</comment>
<comment type="cofactor">
    <cofactor evidence="1">
        <name>NAD(+)</name>
        <dbReference type="ChEBI" id="CHEBI:57540"/>
    </cofactor>
</comment>
<comment type="pathway">
    <text evidence="1">Protein modification; eIF5A hypusination.</text>
</comment>
<comment type="similarity">
    <text evidence="1">Belongs to the deoxyhypusine synthase family.</text>
</comment>
<name>DHYS_IGNH4</name>
<proteinExistence type="inferred from homology"/>
<keyword id="KW-0386">Hypusine biosynthesis</keyword>
<keyword id="KW-0520">NAD</keyword>
<keyword id="KW-1185">Reference proteome</keyword>
<keyword id="KW-0808">Transferase</keyword>
<sequence length="319" mass="35351">MNREDFIKEPVEDIRVSERDTVADLIEKYCKVHGFTAADVCRAVEVLSEGLRNSDLRFLSFTANLVATGLRGLLAQMVRSGYFDVVVTTCGTLDHDVARSLGHKYYKGYFEADDVVLAKSDIHRLGNVFIPVENYGPPVERLVKDVLRELGKTMVAPYELIWEVGKRLSDENSILRAAWERKVPVIVPGITDGAFGTAIFTYSEELKLQGKDFCLDVLADEKLLSDMVFSSKRSAALVVGGGISKHHVIWWNQFKGGLDYAVYLTTAQEYDGSLSGARPREAITWGKLKPEGRSATVYGDATVLLPIIWAGVLAKVQKA</sequence>
<feature type="chain" id="PRO_1000011351" description="Probable deoxyhypusine synthase">
    <location>
        <begin position="1"/>
        <end position="319"/>
    </location>
</feature>
<feature type="active site" description="Nucleophile" evidence="1">
    <location>
        <position position="287"/>
    </location>
</feature>
<reference key="1">
    <citation type="journal article" date="2008" name="Genome Biol.">
        <title>A genomic analysis of the archaeal system Ignicoccus hospitalis-Nanoarchaeum equitans.</title>
        <authorList>
            <person name="Podar M."/>
            <person name="Anderson I."/>
            <person name="Makarova K.S."/>
            <person name="Elkins J.G."/>
            <person name="Ivanova N."/>
            <person name="Wall M.A."/>
            <person name="Lykidis A."/>
            <person name="Mavromatis K."/>
            <person name="Sun H."/>
            <person name="Hudson M.E."/>
            <person name="Chen W."/>
            <person name="Deciu C."/>
            <person name="Hutchison D."/>
            <person name="Eads J.R."/>
            <person name="Anderson A."/>
            <person name="Fernandes F."/>
            <person name="Szeto E."/>
            <person name="Lapidus A."/>
            <person name="Kyrpides N.C."/>
            <person name="Saier M.H. Jr."/>
            <person name="Richardson P.M."/>
            <person name="Rachel R."/>
            <person name="Huber H."/>
            <person name="Eisen J.A."/>
            <person name="Koonin E.V."/>
            <person name="Keller M."/>
            <person name="Stetter K.O."/>
        </authorList>
    </citation>
    <scope>NUCLEOTIDE SEQUENCE [LARGE SCALE GENOMIC DNA]</scope>
    <source>
        <strain>KIN4/I / DSM 18386 / JCM 14125</strain>
    </source>
</reference>
<accession>A8AA61</accession>
<protein>
    <recommendedName>
        <fullName evidence="1">Probable deoxyhypusine synthase</fullName>
        <shortName evidence="1">DHS</shortName>
        <ecNumber evidence="1">2.5.1.46</ecNumber>
    </recommendedName>
</protein>
<gene>
    <name evidence="1" type="primary">dys</name>
    <name type="ordered locus">Igni_0631</name>
</gene>
<evidence type="ECO:0000255" key="1">
    <source>
        <dbReference type="HAMAP-Rule" id="MF_00153"/>
    </source>
</evidence>